<sequence>MPVRRGHVAPQNTYLDTIIRKFEGQSRKFLIANAQMENCAIIYCNDGFCELFGYSRVEVMQQPCTCDFLTGPNTPSSAVSRLAQALLGAEECKVDILYYRKDASSFRCLVDVVPVKNEDGAVIMFILNFEDLAQLLAKCSSRSLSQRLLSQSFLGSEGSHGRPGGPGPGTGRGKYRTISQIPQFTLNFVEFNLEKHRSSSTTEIEIIAPHKVVERTQNVTEKVTQVLSLGADVLPEYKLQAPRIHRWTILHYSPFKAVWDWLILLLVIYTAVFTPYSAAFLLSDQDESRRGACSYTCSPLTVVDLIVDIMFVVDIVINFRTTYVNTNDEVVSHPRRIAVHYFKGWFLIDMVAAIPFDLLIFRTGSDETTTLIGLLKTARLLRLVRVARKLDRYSEYGAAVLFLLMCTFALIAHWLACIWYAIGNVERPYLEHKIGWLDSLGVQLGKRYNGSDPASGPSVQDKYVTALYFTFSSLTSVGFGNVSPNTNSEKVFSICVMLIGSLMYASIFGNVSAIIQRLYSGTARYHTQMLRVKEFIRFHQIPNPLRQRLEEYFQHAWSYTNGIDMNAVLKGFPECLQADICLHLHRALLQHCPAFSGAGKGCLRALAVKFKTTHAPPGDTLVHLGDVLSTLYFISRGSIEILRDDVVVAILGKNDIFGEPVSLHAQPGKSSADVRALTYCDLHKIQRADLLEVLDMYPAFAESFWSKLEVTFNLRDAAGGLHSSPRQAPGSQDHQGFFLSDNQSDAAPPLSISDASGLWPELLQEMPPRHSPQSPQEDPDCWPLKLGSRLEQLQAQMNRLESRVSSDLSRILQLLQKPMPQGHASYILEAPASNDLALVPIASETTSPGPRLPQGFLPPAQTPSYGDLDDCSPKHRNSSPRMPHLAVATDKTLAPSSEQEQPEGLWPPLASPLHPLEVQGLICGPCFSSLPEHLGSVPKQLDFQRHGSDPGFAGSWGH</sequence>
<proteinExistence type="evidence at protein level"/>
<comment type="function">
    <text evidence="1">Pore-forming (alpha) subunit of voltage-gated inwardly rectifying potassium channel. Characterized by unusual gating kinetics by producing relatively small outward currents during membrane depolarization and large inward currents during subsequent repolarization which reflect a rapid inactivation during depolarization and quick recovery from inactivation but slow deactivation (closing) during repolarization. Activates even more slowly than KCNH2.</text>
</comment>
<comment type="catalytic activity">
    <reaction evidence="1">
        <text>K(+)(in) = K(+)(out)</text>
        <dbReference type="Rhea" id="RHEA:29463"/>
        <dbReference type="ChEBI" id="CHEBI:29103"/>
    </reaction>
</comment>
<comment type="subunit">
    <text evidence="1">The potassium channel is probably composed of a homo- or heterotetrameric complex of pore-forming alpha subunits that can associate only within their subfamily.</text>
</comment>
<comment type="subcellular location">
    <subcellularLocation>
        <location evidence="2">Cell membrane</location>
        <topology evidence="2">Multi-pass membrane protein</topology>
    </subcellularLocation>
</comment>
<comment type="alternative products">
    <event type="alternative splicing"/>
    <isoform>
        <id>Q9H252-4</id>
        <name>1</name>
        <sequence type="displayed"/>
    </isoform>
    <isoform>
        <id>Q9H252-1</id>
        <name>2</name>
        <sequence type="described" ref="VSP_062354"/>
    </isoform>
    <isoform>
        <id>Q9H252-2</id>
        <name>3</name>
        <sequence type="described" ref="VSP_062351"/>
    </isoform>
    <isoform>
        <id>Q9H252-3</id>
        <name>4</name>
        <sequence type="described" ref="VSP_062352 VSP_062353"/>
    </isoform>
</comment>
<comment type="tissue specificity">
    <text evidence="7">Expressed in prolactin-secreting adenomas.</text>
</comment>
<comment type="domain">
    <text evidence="2">The S4-S5 linker acts as a signal integrator where it both couples voltage-sensor domain (VSD) movement to pore opening and closure, as well as providing a binding site for other domains that regulate activation and/or deactivation of the channel.</text>
</comment>
<comment type="similarity">
    <text evidence="11">Belongs to the potassium channel family. H (Eag) (TC 1.A.1.20) subfamily. Kv11.2/KCNH6 sub-subfamily.</text>
</comment>
<name>KCNH6_HUMAN</name>
<organism>
    <name type="scientific">Homo sapiens</name>
    <name type="common">Human</name>
    <dbReference type="NCBI Taxonomy" id="9606"/>
    <lineage>
        <taxon>Eukaryota</taxon>
        <taxon>Metazoa</taxon>
        <taxon>Chordata</taxon>
        <taxon>Craniata</taxon>
        <taxon>Vertebrata</taxon>
        <taxon>Euteleostomi</taxon>
        <taxon>Mammalia</taxon>
        <taxon>Eutheria</taxon>
        <taxon>Euarchontoglires</taxon>
        <taxon>Primates</taxon>
        <taxon>Haplorrhini</taxon>
        <taxon>Catarrhini</taxon>
        <taxon>Hominidae</taxon>
        <taxon>Homo</taxon>
    </lineage>
</organism>
<keyword id="KW-0025">Alternative splicing</keyword>
<keyword id="KW-1003">Cell membrane</keyword>
<keyword id="KW-0325">Glycoprotein</keyword>
<keyword id="KW-0407">Ion channel</keyword>
<keyword id="KW-0406">Ion transport</keyword>
<keyword id="KW-0472">Membrane</keyword>
<keyword id="KW-0630">Potassium</keyword>
<keyword id="KW-0631">Potassium channel</keyword>
<keyword id="KW-0633">Potassium transport</keyword>
<keyword id="KW-1267">Proteomics identification</keyword>
<keyword id="KW-1185">Reference proteome</keyword>
<keyword id="KW-0812">Transmembrane</keyword>
<keyword id="KW-1133">Transmembrane helix</keyword>
<keyword id="KW-0813">Transport</keyword>
<keyword id="KW-0851">Voltage-gated channel</keyword>
<gene>
    <name evidence="12" type="primary">KCNH6</name>
    <name type="synonym">ERG2</name>
</gene>
<dbReference type="EMBL" id="AF311913">
    <property type="protein sequence ID" value="AAG40871.1"/>
    <property type="molecule type" value="mRNA"/>
</dbReference>
<dbReference type="EMBL" id="AK090969">
    <property type="protein sequence ID" value="BAC03559.1"/>
    <property type="molecule type" value="mRNA"/>
</dbReference>
<dbReference type="EMBL" id="AK091877">
    <property type="protein sequence ID" value="BAC03764.1"/>
    <property type="molecule type" value="mRNA"/>
</dbReference>
<dbReference type="EMBL" id="AC113554">
    <property type="status" value="NOT_ANNOTATED_CDS"/>
    <property type="molecule type" value="Genomic_DNA"/>
</dbReference>
<dbReference type="EMBL" id="BC006334">
    <property type="protein sequence ID" value="AAH06334.1"/>
    <property type="molecule type" value="mRNA"/>
</dbReference>
<dbReference type="CCDS" id="CCDS11638.1">
    <molecule id="Q9H252-1"/>
</dbReference>
<dbReference type="CCDS" id="CCDS11639.1">
    <molecule id="Q9H252-2"/>
</dbReference>
<dbReference type="CCDS" id="CCDS62290.1">
    <molecule id="Q9H252-4"/>
</dbReference>
<dbReference type="RefSeq" id="NP_001265848.1">
    <molecule id="Q9H252-4"/>
    <property type="nucleotide sequence ID" value="NM_001278919.2"/>
</dbReference>
<dbReference type="RefSeq" id="NP_001265849.1">
    <property type="nucleotide sequence ID" value="NM_001278920.1"/>
</dbReference>
<dbReference type="RefSeq" id="NP_110406.1">
    <molecule id="Q9H252-1"/>
    <property type="nucleotide sequence ID" value="NM_030779.4"/>
</dbReference>
<dbReference type="RefSeq" id="NP_775115.1">
    <molecule id="Q9H252-2"/>
    <property type="nucleotide sequence ID" value="NM_173092.4"/>
</dbReference>
<dbReference type="RefSeq" id="XP_011523612.1">
    <molecule id="Q9H252-2"/>
    <property type="nucleotide sequence ID" value="XM_011525310.3"/>
</dbReference>
<dbReference type="RefSeq" id="XP_016880664.1">
    <molecule id="Q9H252-1"/>
    <property type="nucleotide sequence ID" value="XM_017025175.2"/>
</dbReference>
<dbReference type="RefSeq" id="XP_016880666.1">
    <molecule id="Q9H252-4"/>
    <property type="nucleotide sequence ID" value="XM_017025177.2"/>
</dbReference>
<dbReference type="EMDB" id="EMD-30412"/>
<dbReference type="EMDB" id="EMD-30413"/>
<dbReference type="SMR" id="Q9H252"/>
<dbReference type="BioGRID" id="123351">
    <property type="interactions" value="2"/>
</dbReference>
<dbReference type="FunCoup" id="Q9H252">
    <property type="interactions" value="259"/>
</dbReference>
<dbReference type="STRING" id="9606.ENSP00000463533"/>
<dbReference type="BindingDB" id="Q9H252"/>
<dbReference type="ChEMBL" id="CHEMBL2363011"/>
<dbReference type="DrugBank" id="DB01118">
    <property type="generic name" value="Amiodarone"/>
</dbReference>
<dbReference type="DrugBank" id="DB00321">
    <property type="generic name" value="Amitriptyline"/>
</dbReference>
<dbReference type="DrugBank" id="DB00590">
    <property type="generic name" value="Doxazosin"/>
</dbReference>
<dbReference type="DrugBank" id="DB00228">
    <property type="generic name" value="Enflurane"/>
</dbReference>
<dbReference type="DrugBank" id="DB00308">
    <property type="generic name" value="Ibutilide"/>
</dbReference>
<dbReference type="DrugBank" id="DB01110">
    <property type="generic name" value="Miconazole"/>
</dbReference>
<dbReference type="DrugBank" id="DB01069">
    <property type="generic name" value="Promethazine"/>
</dbReference>
<dbReference type="DrugBank" id="DB06207">
    <property type="generic name" value="Silodosin"/>
</dbReference>
<dbReference type="DrugBank" id="DB01162">
    <property type="generic name" value="Terazosin"/>
</dbReference>
<dbReference type="DrugBank" id="DB03701">
    <property type="generic name" value="Vanoxerine"/>
</dbReference>
<dbReference type="DrugCentral" id="Q9H252"/>
<dbReference type="GuidetoPHARMACOLOGY" id="573"/>
<dbReference type="GlyCosmos" id="Q9H252">
    <property type="glycosylation" value="1 site, No reported glycans"/>
</dbReference>
<dbReference type="GlyGen" id="Q9H252">
    <property type="glycosylation" value="1 site"/>
</dbReference>
<dbReference type="iPTMnet" id="Q9H252"/>
<dbReference type="PhosphoSitePlus" id="Q9H252"/>
<dbReference type="BioMuta" id="KCNH6"/>
<dbReference type="DMDM" id="26006810"/>
<dbReference type="jPOST" id="Q9H252"/>
<dbReference type="MassIVE" id="Q9H252"/>
<dbReference type="PaxDb" id="9606-ENSP00000463533"/>
<dbReference type="PeptideAtlas" id="Q9H252"/>
<dbReference type="ProteomicsDB" id="80495">
    <molecule id="Q9H252-1"/>
</dbReference>
<dbReference type="ProteomicsDB" id="80496">
    <molecule id="Q9H252-2"/>
</dbReference>
<dbReference type="ProteomicsDB" id="80497">
    <molecule id="Q9H252-3"/>
</dbReference>
<dbReference type="Antibodypedia" id="18667">
    <property type="antibodies" value="140 antibodies from 30 providers"/>
</dbReference>
<dbReference type="DNASU" id="81033"/>
<dbReference type="Ensembl" id="ENST00000314672.10">
    <molecule id="Q9H252-4"/>
    <property type="protein sequence ID" value="ENSP00000318212.5"/>
    <property type="gene ID" value="ENSG00000173826.15"/>
</dbReference>
<dbReference type="Ensembl" id="ENST00000456941.6">
    <molecule id="Q9H252-2"/>
    <property type="protein sequence ID" value="ENSP00000396900.2"/>
    <property type="gene ID" value="ENSG00000173826.15"/>
</dbReference>
<dbReference type="Ensembl" id="ENST00000580652.5">
    <molecule id="Q9H252-3"/>
    <property type="protein sequence ID" value="ENSP00000464672.1"/>
    <property type="gene ID" value="ENSG00000173826.15"/>
</dbReference>
<dbReference type="Ensembl" id="ENST00000581784.5">
    <molecule id="Q9H252-2"/>
    <property type="protein sequence ID" value="ENSP00000463830.1"/>
    <property type="gene ID" value="ENSG00000173826.15"/>
</dbReference>
<dbReference type="Ensembl" id="ENST00000583023.1">
    <molecule id="Q9H252-1"/>
    <property type="protein sequence ID" value="ENSP00000463533.1"/>
    <property type="gene ID" value="ENSG00000173826.15"/>
</dbReference>
<dbReference type="GeneID" id="81033"/>
<dbReference type="KEGG" id="hsa:81033"/>
<dbReference type="MANE-Select" id="ENST00000314672.10">
    <property type="protein sequence ID" value="ENSP00000318212.5"/>
    <property type="RefSeq nucleotide sequence ID" value="NM_001278919.2"/>
    <property type="RefSeq protein sequence ID" value="NP_001265848.1"/>
</dbReference>
<dbReference type="UCSC" id="uc002jax.2">
    <molecule id="Q9H252-4"/>
    <property type="organism name" value="human"/>
</dbReference>
<dbReference type="AGR" id="HGNC:18862"/>
<dbReference type="CTD" id="81033"/>
<dbReference type="DisGeNET" id="81033"/>
<dbReference type="GeneCards" id="KCNH6"/>
<dbReference type="HGNC" id="HGNC:18862">
    <property type="gene designation" value="KCNH6"/>
</dbReference>
<dbReference type="HPA" id="ENSG00000173826">
    <property type="expression patterns" value="Tissue enhanced (intestine, kidney, pituitary gland, prostate, retina)"/>
</dbReference>
<dbReference type="MIM" id="608168">
    <property type="type" value="gene"/>
</dbReference>
<dbReference type="neXtProt" id="NX_Q9H252"/>
<dbReference type="OpenTargets" id="ENSG00000173826"/>
<dbReference type="PharmGKB" id="PA38722"/>
<dbReference type="VEuPathDB" id="HostDB:ENSG00000173826"/>
<dbReference type="eggNOG" id="KOG0498">
    <property type="taxonomic scope" value="Eukaryota"/>
</dbReference>
<dbReference type="GeneTree" id="ENSGT00940000157790"/>
<dbReference type="HOGENOM" id="CLU_005746_2_3_1"/>
<dbReference type="InParanoid" id="Q9H252"/>
<dbReference type="OMA" id="FWEDRRP"/>
<dbReference type="OrthoDB" id="432483at2759"/>
<dbReference type="PAN-GO" id="Q9H252">
    <property type="GO annotations" value="6 GO annotations based on evolutionary models"/>
</dbReference>
<dbReference type="PhylomeDB" id="Q9H252"/>
<dbReference type="TreeFam" id="TF313130"/>
<dbReference type="PathwayCommons" id="Q9H252"/>
<dbReference type="Reactome" id="R-HSA-1296072">
    <property type="pathway name" value="Voltage gated Potassium channels"/>
</dbReference>
<dbReference type="BioGRID-ORCS" id="81033">
    <property type="hits" value="7 hits in 1148 CRISPR screens"/>
</dbReference>
<dbReference type="GeneWiki" id="KCNH6"/>
<dbReference type="GenomeRNAi" id="81033"/>
<dbReference type="Pharos" id="Q9H252">
    <property type="development level" value="Tclin"/>
</dbReference>
<dbReference type="PRO" id="PR:Q9H252"/>
<dbReference type="Proteomes" id="UP000005640">
    <property type="component" value="Chromosome 17"/>
</dbReference>
<dbReference type="RNAct" id="Q9H252">
    <property type="molecule type" value="protein"/>
</dbReference>
<dbReference type="Bgee" id="ENSG00000173826">
    <property type="expression patterns" value="Expressed in buccal mucosa cell and 70 other cell types or tissues"/>
</dbReference>
<dbReference type="ExpressionAtlas" id="Q9H252">
    <property type="expression patterns" value="baseline and differential"/>
</dbReference>
<dbReference type="GO" id="GO:0034702">
    <property type="term" value="C:monoatomic ion channel complex"/>
    <property type="evidence" value="ECO:0007669"/>
    <property type="project" value="UniProtKB-KW"/>
</dbReference>
<dbReference type="GO" id="GO:0005886">
    <property type="term" value="C:plasma membrane"/>
    <property type="evidence" value="ECO:0000318"/>
    <property type="project" value="GO_Central"/>
</dbReference>
<dbReference type="GO" id="GO:0005242">
    <property type="term" value="F:inward rectifier potassium channel activity"/>
    <property type="evidence" value="ECO:0000318"/>
    <property type="project" value="GO_Central"/>
</dbReference>
<dbReference type="GO" id="GO:0086013">
    <property type="term" value="P:membrane repolarization during cardiac muscle cell action potential"/>
    <property type="evidence" value="ECO:0000318"/>
    <property type="project" value="GO_Central"/>
</dbReference>
<dbReference type="GO" id="GO:0071805">
    <property type="term" value="P:potassium ion transmembrane transport"/>
    <property type="evidence" value="ECO:0000318"/>
    <property type="project" value="GO_Central"/>
</dbReference>
<dbReference type="GO" id="GO:0086091">
    <property type="term" value="P:regulation of heart rate by cardiac conduction"/>
    <property type="evidence" value="ECO:0000318"/>
    <property type="project" value="GO_Central"/>
</dbReference>
<dbReference type="GO" id="GO:0060307">
    <property type="term" value="P:regulation of ventricular cardiac muscle cell membrane repolarization"/>
    <property type="evidence" value="ECO:0000318"/>
    <property type="project" value="GO_Central"/>
</dbReference>
<dbReference type="CDD" id="cd00038">
    <property type="entry name" value="CAP_ED"/>
    <property type="match status" value="1"/>
</dbReference>
<dbReference type="CDD" id="cd00130">
    <property type="entry name" value="PAS"/>
    <property type="match status" value="1"/>
</dbReference>
<dbReference type="FunFam" id="1.10.287.70:FF:000020">
    <property type="entry name" value="Potassium channel, voltage-gated eag-related subfamily H, member 7"/>
    <property type="match status" value="1"/>
</dbReference>
<dbReference type="FunFam" id="2.60.120.10:FF:000011">
    <property type="entry name" value="Potassium channel, voltage-gated eag-related subfamily H, member 7"/>
    <property type="match status" value="1"/>
</dbReference>
<dbReference type="FunFam" id="1.10.1200.260:FF:000001">
    <property type="entry name" value="Potassium voltage-gated channel subfamily H member 7"/>
    <property type="match status" value="1"/>
</dbReference>
<dbReference type="FunFam" id="3.30.450.20:FF:000001">
    <property type="entry name" value="Potassium voltage-gated channel subfamily H member 7"/>
    <property type="match status" value="1"/>
</dbReference>
<dbReference type="Gene3D" id="1.10.1200.260">
    <property type="match status" value="1"/>
</dbReference>
<dbReference type="Gene3D" id="1.10.287.70">
    <property type="match status" value="1"/>
</dbReference>
<dbReference type="Gene3D" id="2.60.120.10">
    <property type="entry name" value="Jelly Rolls"/>
    <property type="match status" value="1"/>
</dbReference>
<dbReference type="Gene3D" id="3.30.450.20">
    <property type="entry name" value="PAS domain"/>
    <property type="match status" value="1"/>
</dbReference>
<dbReference type="InterPro" id="IPR000595">
    <property type="entry name" value="cNMP-bd_dom"/>
</dbReference>
<dbReference type="InterPro" id="IPR018490">
    <property type="entry name" value="cNMP-bd_dom_sf"/>
</dbReference>
<dbReference type="InterPro" id="IPR005821">
    <property type="entry name" value="Ion_trans_dom"/>
</dbReference>
<dbReference type="InterPro" id="IPR003938">
    <property type="entry name" value="K_chnl_volt-dep_EAG/ELK/ERG"/>
</dbReference>
<dbReference type="InterPro" id="IPR003967">
    <property type="entry name" value="K_chnl_volt-dep_ERG"/>
</dbReference>
<dbReference type="InterPro" id="IPR050818">
    <property type="entry name" value="KCNH_animal-type"/>
</dbReference>
<dbReference type="InterPro" id="IPR000014">
    <property type="entry name" value="PAS"/>
</dbReference>
<dbReference type="InterPro" id="IPR035965">
    <property type="entry name" value="PAS-like_dom_sf"/>
</dbReference>
<dbReference type="InterPro" id="IPR014710">
    <property type="entry name" value="RmlC-like_jellyroll"/>
</dbReference>
<dbReference type="PANTHER" id="PTHR10217:SF468">
    <property type="entry name" value="POTASSIUM VOLTAGE-GATED CHANNEL SUBFAMILY H MEMBER 6"/>
    <property type="match status" value="1"/>
</dbReference>
<dbReference type="PANTHER" id="PTHR10217">
    <property type="entry name" value="VOLTAGE AND LIGAND GATED POTASSIUM CHANNEL"/>
    <property type="match status" value="1"/>
</dbReference>
<dbReference type="Pfam" id="PF00027">
    <property type="entry name" value="cNMP_binding"/>
    <property type="match status" value="1"/>
</dbReference>
<dbReference type="Pfam" id="PF00520">
    <property type="entry name" value="Ion_trans"/>
    <property type="match status" value="1"/>
</dbReference>
<dbReference type="Pfam" id="PF13426">
    <property type="entry name" value="PAS_9"/>
    <property type="match status" value="1"/>
</dbReference>
<dbReference type="PRINTS" id="PR01463">
    <property type="entry name" value="EAGCHANLFMLY"/>
</dbReference>
<dbReference type="PRINTS" id="PR01470">
    <property type="entry name" value="ERGCHANNEL"/>
</dbReference>
<dbReference type="SMART" id="SM00100">
    <property type="entry name" value="cNMP"/>
    <property type="match status" value="1"/>
</dbReference>
<dbReference type="SUPFAM" id="SSF51206">
    <property type="entry name" value="cAMP-binding domain-like"/>
    <property type="match status" value="1"/>
</dbReference>
<dbReference type="SUPFAM" id="SSF55785">
    <property type="entry name" value="PYP-like sensor domain (PAS domain)"/>
    <property type="match status" value="1"/>
</dbReference>
<dbReference type="SUPFAM" id="SSF81324">
    <property type="entry name" value="Voltage-gated potassium channels"/>
    <property type="match status" value="1"/>
</dbReference>
<dbReference type="PROSITE" id="PS50042">
    <property type="entry name" value="CNMP_BINDING_3"/>
    <property type="match status" value="1"/>
</dbReference>
<reference key="1">
    <citation type="submission" date="2000-10" db="EMBL/GenBank/DDBJ databases">
        <title>Human Eag-related gene member 2 (Herg2) potassium channel.</title>
        <authorList>
            <person name="Titus S.A."/>
            <person name="Ganetzky B.S."/>
        </authorList>
    </citation>
    <scope>NUCLEOTIDE SEQUENCE [MRNA] (ISOFORM 2)</scope>
</reference>
<reference key="2">
    <citation type="journal article" date="2004" name="Nat. Genet.">
        <title>Complete sequencing and characterization of 21,243 full-length human cDNAs.</title>
        <authorList>
            <person name="Ota T."/>
            <person name="Suzuki Y."/>
            <person name="Nishikawa T."/>
            <person name="Otsuki T."/>
            <person name="Sugiyama T."/>
            <person name="Irie R."/>
            <person name="Wakamatsu A."/>
            <person name="Hayashi K."/>
            <person name="Sato H."/>
            <person name="Nagai K."/>
            <person name="Kimura K."/>
            <person name="Makita H."/>
            <person name="Sekine M."/>
            <person name="Obayashi M."/>
            <person name="Nishi T."/>
            <person name="Shibahara T."/>
            <person name="Tanaka T."/>
            <person name="Ishii S."/>
            <person name="Yamamoto J."/>
            <person name="Saito K."/>
            <person name="Kawai Y."/>
            <person name="Isono Y."/>
            <person name="Nakamura Y."/>
            <person name="Nagahari K."/>
            <person name="Murakami K."/>
            <person name="Yasuda T."/>
            <person name="Iwayanagi T."/>
            <person name="Wagatsuma M."/>
            <person name="Shiratori A."/>
            <person name="Sudo H."/>
            <person name="Hosoiri T."/>
            <person name="Kaku Y."/>
            <person name="Kodaira H."/>
            <person name="Kondo H."/>
            <person name="Sugawara M."/>
            <person name="Takahashi M."/>
            <person name="Kanda K."/>
            <person name="Yokoi T."/>
            <person name="Furuya T."/>
            <person name="Kikkawa E."/>
            <person name="Omura Y."/>
            <person name="Abe K."/>
            <person name="Kamihara K."/>
            <person name="Katsuta N."/>
            <person name="Sato K."/>
            <person name="Tanikawa M."/>
            <person name="Yamazaki M."/>
            <person name="Ninomiya K."/>
            <person name="Ishibashi T."/>
            <person name="Yamashita H."/>
            <person name="Murakawa K."/>
            <person name="Fujimori K."/>
            <person name="Tanai H."/>
            <person name="Kimata M."/>
            <person name="Watanabe M."/>
            <person name="Hiraoka S."/>
            <person name="Chiba Y."/>
            <person name="Ishida S."/>
            <person name="Ono Y."/>
            <person name="Takiguchi S."/>
            <person name="Watanabe S."/>
            <person name="Yosida M."/>
            <person name="Hotuta T."/>
            <person name="Kusano J."/>
            <person name="Kanehori K."/>
            <person name="Takahashi-Fujii A."/>
            <person name="Hara H."/>
            <person name="Tanase T.-O."/>
            <person name="Nomura Y."/>
            <person name="Togiya S."/>
            <person name="Komai F."/>
            <person name="Hara R."/>
            <person name="Takeuchi K."/>
            <person name="Arita M."/>
            <person name="Imose N."/>
            <person name="Musashino K."/>
            <person name="Yuuki H."/>
            <person name="Oshima A."/>
            <person name="Sasaki N."/>
            <person name="Aotsuka S."/>
            <person name="Yoshikawa Y."/>
            <person name="Matsunawa H."/>
            <person name="Ichihara T."/>
            <person name="Shiohata N."/>
            <person name="Sano S."/>
            <person name="Moriya S."/>
            <person name="Momiyama H."/>
            <person name="Satoh N."/>
            <person name="Takami S."/>
            <person name="Terashima Y."/>
            <person name="Suzuki O."/>
            <person name="Nakagawa S."/>
            <person name="Senoh A."/>
            <person name="Mizoguchi H."/>
            <person name="Goto Y."/>
            <person name="Shimizu F."/>
            <person name="Wakebe H."/>
            <person name="Hishigaki H."/>
            <person name="Watanabe T."/>
            <person name="Sugiyama A."/>
            <person name="Takemoto M."/>
            <person name="Kawakami B."/>
            <person name="Yamazaki M."/>
            <person name="Watanabe K."/>
            <person name="Kumagai A."/>
            <person name="Itakura S."/>
            <person name="Fukuzumi Y."/>
            <person name="Fujimori Y."/>
            <person name="Komiyama M."/>
            <person name="Tashiro H."/>
            <person name="Tanigami A."/>
            <person name="Fujiwara T."/>
            <person name="Ono T."/>
            <person name="Yamada K."/>
            <person name="Fujii Y."/>
            <person name="Ozaki K."/>
            <person name="Hirao M."/>
            <person name="Ohmori Y."/>
            <person name="Kawabata A."/>
            <person name="Hikiji T."/>
            <person name="Kobatake N."/>
            <person name="Inagaki H."/>
            <person name="Ikema Y."/>
            <person name="Okamoto S."/>
            <person name="Okitani R."/>
            <person name="Kawakami T."/>
            <person name="Noguchi S."/>
            <person name="Itoh T."/>
            <person name="Shigeta K."/>
            <person name="Senba T."/>
            <person name="Matsumura K."/>
            <person name="Nakajima Y."/>
            <person name="Mizuno T."/>
            <person name="Morinaga M."/>
            <person name="Sasaki M."/>
            <person name="Togashi T."/>
            <person name="Oyama M."/>
            <person name="Hata H."/>
            <person name="Watanabe M."/>
            <person name="Komatsu T."/>
            <person name="Mizushima-Sugano J."/>
            <person name="Satoh T."/>
            <person name="Shirai Y."/>
            <person name="Takahashi Y."/>
            <person name="Nakagawa K."/>
            <person name="Okumura K."/>
            <person name="Nagase T."/>
            <person name="Nomura N."/>
            <person name="Kikuchi H."/>
            <person name="Masuho Y."/>
            <person name="Yamashita R."/>
            <person name="Nakai K."/>
            <person name="Yada T."/>
            <person name="Nakamura Y."/>
            <person name="Ohara O."/>
            <person name="Isogai T."/>
            <person name="Sugano S."/>
        </authorList>
    </citation>
    <scope>NUCLEOTIDE SEQUENCE [LARGE SCALE MRNA] (ISOFORM 3)</scope>
    <scope>VARIANT MET-889</scope>
    <source>
        <tissue>Amygdala</tissue>
        <tissue>Kidney</tissue>
    </source>
</reference>
<reference key="3">
    <citation type="journal article" date="2006" name="Nature">
        <title>DNA sequence of human chromosome 17 and analysis of rearrangement in the human lineage.</title>
        <authorList>
            <person name="Zody M.C."/>
            <person name="Garber M."/>
            <person name="Adams D.J."/>
            <person name="Sharpe T."/>
            <person name="Harrow J."/>
            <person name="Lupski J.R."/>
            <person name="Nicholson C."/>
            <person name="Searle S.M."/>
            <person name="Wilming L."/>
            <person name="Young S.K."/>
            <person name="Abouelleil A."/>
            <person name="Allen N.R."/>
            <person name="Bi W."/>
            <person name="Bloom T."/>
            <person name="Borowsky M.L."/>
            <person name="Bugalter B.E."/>
            <person name="Butler J."/>
            <person name="Chang J.L."/>
            <person name="Chen C.-K."/>
            <person name="Cook A."/>
            <person name="Corum B."/>
            <person name="Cuomo C.A."/>
            <person name="de Jong P.J."/>
            <person name="DeCaprio D."/>
            <person name="Dewar K."/>
            <person name="FitzGerald M."/>
            <person name="Gilbert J."/>
            <person name="Gibson R."/>
            <person name="Gnerre S."/>
            <person name="Goldstein S."/>
            <person name="Grafham D.V."/>
            <person name="Grocock R."/>
            <person name="Hafez N."/>
            <person name="Hagopian D.S."/>
            <person name="Hart E."/>
            <person name="Norman C.H."/>
            <person name="Humphray S."/>
            <person name="Jaffe D.B."/>
            <person name="Jones M."/>
            <person name="Kamal M."/>
            <person name="Khodiyar V.K."/>
            <person name="LaButti K."/>
            <person name="Laird G."/>
            <person name="Lehoczky J."/>
            <person name="Liu X."/>
            <person name="Lokyitsang T."/>
            <person name="Loveland J."/>
            <person name="Lui A."/>
            <person name="Macdonald P."/>
            <person name="Major J.E."/>
            <person name="Matthews L."/>
            <person name="Mauceli E."/>
            <person name="McCarroll S.A."/>
            <person name="Mihalev A.H."/>
            <person name="Mudge J."/>
            <person name="Nguyen C."/>
            <person name="Nicol R."/>
            <person name="O'Leary S.B."/>
            <person name="Osoegawa K."/>
            <person name="Schwartz D.C."/>
            <person name="Shaw-Smith C."/>
            <person name="Stankiewicz P."/>
            <person name="Steward C."/>
            <person name="Swarbreck D."/>
            <person name="Venkataraman V."/>
            <person name="Whittaker C.A."/>
            <person name="Yang X."/>
            <person name="Zimmer A.R."/>
            <person name="Bradley A."/>
            <person name="Hubbard T."/>
            <person name="Birren B.W."/>
            <person name="Rogers J."/>
            <person name="Lander E.S."/>
            <person name="Nusbaum C."/>
        </authorList>
    </citation>
    <scope>NUCLEOTIDE SEQUENCE [LARGE SCALE GENOMIC DNA]</scope>
</reference>
<reference key="4">
    <citation type="journal article" date="2004" name="Genome Res.">
        <title>The status, quality, and expansion of the NIH full-length cDNA project: the Mammalian Gene Collection (MGC).</title>
        <authorList>
            <consortium name="The MGC Project Team"/>
        </authorList>
    </citation>
    <scope>NUCLEOTIDE SEQUENCE [LARGE SCALE MRNA] (ISOFORM 4)</scope>
    <source>
        <tissue>Uterus</tissue>
    </source>
</reference>
<reference key="5">
    <citation type="journal article" date="2003" name="Pflugers Arch.">
        <title>HERG K(+) currents in human prolactin-secreting adenoma cells.</title>
        <authorList>
            <person name="Bauer C.K."/>
            <person name="Wulfsen I."/>
            <person name="Schaefer R."/>
            <person name="Glassmeier G."/>
            <person name="Wimmers S."/>
            <person name="Flitsch J."/>
            <person name="Luedecke D.K."/>
            <person name="Schwarz J.R."/>
        </authorList>
    </citation>
    <scope>TISSUE SPECIFICITY</scope>
</reference>
<reference key="6">
    <citation type="journal article" date="2009" name="Mol. Cell. Proteomics">
        <title>A strategy for precise and large scale identification of core fucosylated glycoproteins.</title>
        <authorList>
            <person name="Jia W."/>
            <person name="Lu Z."/>
            <person name="Fu Y."/>
            <person name="Wang H.P."/>
            <person name="Wang L.H."/>
            <person name="Chi H."/>
            <person name="Yuan Z.F."/>
            <person name="Zheng Z.B."/>
            <person name="Song L.N."/>
            <person name="Han H.H."/>
            <person name="Liang Y.M."/>
            <person name="Wang J.L."/>
            <person name="Cai Y."/>
            <person name="Zhang Y.K."/>
            <person name="Deng Y.L."/>
            <person name="Ying W.T."/>
            <person name="He S.M."/>
            <person name="Qian X.H."/>
        </authorList>
    </citation>
    <scope>GLYCOSYLATION AT ASN-449</scope>
</reference>
<evidence type="ECO:0000250" key="1">
    <source>
        <dbReference type="UniProtKB" id="O54853"/>
    </source>
</evidence>
<evidence type="ECO:0000250" key="2">
    <source>
        <dbReference type="UniProtKB" id="Q12809"/>
    </source>
</evidence>
<evidence type="ECO:0000250" key="3">
    <source>
        <dbReference type="UniProtKB" id="Q63472"/>
    </source>
</evidence>
<evidence type="ECO:0000255" key="4"/>
<evidence type="ECO:0000255" key="5">
    <source>
        <dbReference type="PROSITE-ProRule" id="PRU00060"/>
    </source>
</evidence>
<evidence type="ECO:0000256" key="6">
    <source>
        <dbReference type="SAM" id="MobiDB-lite"/>
    </source>
</evidence>
<evidence type="ECO:0000269" key="7">
    <source>
    </source>
</evidence>
<evidence type="ECO:0000269" key="8">
    <source>
    </source>
</evidence>
<evidence type="ECO:0000269" key="9">
    <source>
    </source>
</evidence>
<evidence type="ECO:0000303" key="10">
    <source ref="1"/>
</evidence>
<evidence type="ECO:0000305" key="11"/>
<evidence type="ECO:0000312" key="12">
    <source>
        <dbReference type="HGNC" id="HGNC:18862"/>
    </source>
</evidence>
<feature type="chain" id="PRO_0000054013" description="Voltage-gated inwardly rectifying potassium channel KCNH6">
    <location>
        <begin position="1"/>
        <end position="958"/>
    </location>
</feature>
<feature type="topological domain" description="Cytoplasmic" evidence="4">
    <location>
        <begin position="1"/>
        <end position="261"/>
    </location>
</feature>
<feature type="transmembrane region" description="Helical; Name=Segment S1" evidence="4">
    <location>
        <begin position="262"/>
        <end position="282"/>
    </location>
</feature>
<feature type="topological domain" description="Extracellular" evidence="4">
    <location>
        <begin position="283"/>
        <end position="298"/>
    </location>
</feature>
<feature type="transmembrane region" description="Helical; Name=Segment S2" evidence="4">
    <location>
        <begin position="299"/>
        <end position="319"/>
    </location>
</feature>
<feature type="topological domain" description="Cytoplasmic" evidence="4">
    <location>
        <begin position="320"/>
        <end position="340"/>
    </location>
</feature>
<feature type="transmembrane region" description="Helical; Name=Segment S3" evidence="4">
    <location>
        <begin position="341"/>
        <end position="361"/>
    </location>
</feature>
<feature type="topological domain" description="Extracellular" evidence="4">
    <location>
        <begin position="362"/>
        <end position="370"/>
    </location>
</feature>
<feature type="transmembrane region" description="Helical; Voltage-sensor; Name=Segment S4" evidence="4">
    <location>
        <begin position="371"/>
        <end position="391"/>
    </location>
</feature>
<feature type="topological domain" description="Cytoplasmic" evidence="4">
    <location>
        <begin position="392"/>
        <end position="398"/>
    </location>
</feature>
<feature type="transmembrane region" description="Helical; Name=Segment S5" evidence="4">
    <location>
        <begin position="399"/>
        <end position="419"/>
    </location>
</feature>
<feature type="topological domain" description="Extracellular" evidence="4">
    <location>
        <begin position="420"/>
        <end position="463"/>
    </location>
</feature>
<feature type="intramembrane region" description="Pore-forming; Name=Segment H5" evidence="4">
    <location>
        <begin position="464"/>
        <end position="484"/>
    </location>
</feature>
<feature type="topological domain" description="Extracellular" evidence="4">
    <location>
        <begin position="485"/>
        <end position="490"/>
    </location>
</feature>
<feature type="transmembrane region" description="Helical; Name=Segment S6" evidence="4">
    <location>
        <begin position="491"/>
        <end position="511"/>
    </location>
</feature>
<feature type="topological domain" description="Cytoplasmic" evidence="4">
    <location>
        <begin position="512"/>
        <end position="958"/>
    </location>
</feature>
<feature type="domain" description="PAS">
    <location>
        <begin position="41"/>
        <end position="70"/>
    </location>
</feature>
<feature type="domain" description="PAC">
    <location>
        <begin position="92"/>
        <end position="144"/>
    </location>
</feature>
<feature type="region of interest" description="cNMP-binding domain" evidence="5">
    <location>
        <begin position="594"/>
        <end position="694"/>
    </location>
</feature>
<feature type="region of interest" description="Disordered" evidence="6">
    <location>
        <begin position="720"/>
        <end position="751"/>
    </location>
</feature>
<feature type="region of interest" description="Disordered" evidence="6">
    <location>
        <begin position="845"/>
        <end position="910"/>
    </location>
</feature>
<feature type="short sequence motif" description="Selectivity filter" evidence="3">
    <location>
        <begin position="476"/>
        <end position="481"/>
    </location>
</feature>
<feature type="compositionally biased region" description="Polar residues" evidence="6">
    <location>
        <begin position="724"/>
        <end position="745"/>
    </location>
</feature>
<feature type="glycosylation site" description="N-linked (GlcNAc...) (complex) asparagine" evidence="9">
    <location>
        <position position="449"/>
    </location>
</feature>
<feature type="splice variant" id="VSP_062351" description="In isoform 3.">
    <original>WYAIGNVERPYLEHKIGWLDSLGVQLGKRYNGSDPASGPSVQDKYVTALYFTFS</original>
    <variation>C</variation>
    <location>
        <begin position="419"/>
        <end position="472"/>
    </location>
</feature>
<feature type="splice variant" id="VSP_062352" description="In isoform 4.">
    <original>SL</original>
    <variation>CE</variation>
    <location>
        <begin position="501"/>
        <end position="502"/>
    </location>
</feature>
<feature type="splice variant" id="VSP_062353" description="In isoform 4.">
    <location>
        <begin position="503"/>
        <end position="958"/>
    </location>
</feature>
<feature type="splice variant" id="VSP_062354" description="In isoform 2.">
    <original>S</original>
    <variation>SGSPHELGPQFPSKGYSLLGPGSQNSMGAGPCAPGHP</variation>
    <location>
        <position position="744"/>
    </location>
</feature>
<feature type="sequence variant" id="VAR_053857" description="In dbSNP:rs35399062.">
    <original>G</original>
    <variation>R</variation>
    <location>
        <position position="165"/>
    </location>
</feature>
<feature type="sequence variant" id="VAR_053858" description="In dbSNP:rs35819807." evidence="8">
    <original>T</original>
    <variation>M</variation>
    <location>
        <position position="889"/>
    </location>
</feature>
<feature type="sequence conflict" description="In Ref. 2; BAC03764." evidence="11" ref="2">
    <original>F</original>
    <variation>L</variation>
    <location>
        <position position="927"/>
    </location>
</feature>
<accession>Q9H252</accession>
<accession>J9JID4</accession>
<accession>Q9BRD7</accession>
<protein>
    <recommendedName>
        <fullName evidence="11">Voltage-gated inwardly rectifying potassium channel KCNH6</fullName>
    </recommendedName>
    <alternativeName>
        <fullName>Ether-a-go-go-related gene potassium channel 2</fullName>
        <shortName>ERG-2</shortName>
        <shortName>Eag-related protein 2</shortName>
        <shortName>Ether-a-go-go-related protein 2</shortName>
        <shortName>hERG-2</shortName>
        <shortName evidence="10">hERG2</shortName>
    </alternativeName>
    <alternativeName>
        <fullName>Potassium voltage-gated channel subfamily H member 6</fullName>
    </alternativeName>
    <alternativeName>
        <fullName>Voltage-gated potassium channel subunit Kv11.2</fullName>
    </alternativeName>
</protein>